<protein>
    <recommendedName>
        <fullName>Fiber protein</fullName>
        <shortName>SPIKE</shortName>
    </recommendedName>
    <alternativeName>
        <fullName>Protein IV</fullName>
    </alternativeName>
</protein>
<comment type="function">
    <text evidence="1">Forms spikes that protrude from each vertex of the icosahedral capsid. Interacts with host receptor to provide virion initial attachment to target cell. Fiber proteins are shed during virus entry, when virus is still at the cell surface (By similarity).</text>
</comment>
<comment type="subunit">
    <text evidence="1">Homotrimer. Interacts (via N-terminal tail region) with pentons (By similarity).</text>
</comment>
<comment type="subcellular location">
    <subcellularLocation>
        <location evidence="1">Virion</location>
    </subcellularLocation>
    <subcellularLocation>
        <location evidence="1">Host nucleus</location>
    </subcellularLocation>
    <text evidence="1">Anchored to the pentons, protrudes from the virion surface.</text>
</comment>
<comment type="induction">
    <text>Expressed in the late phase of the viral replicative cycle.</text>
</comment>
<comment type="domain">
    <text evidence="1">The tail region anchors the fiber to penton base capsomers, whereas the shaft, built from several repeated motifs, allows the knob to protrude from the virion.</text>
</comment>
<comment type="miscellaneous">
    <text evidence="1">All late proteins expressed from the major late promoter are produced by alternative splicing and alternative polyadenylation of the same gene giving rise to non-overlapping ORFs. A leader sequence is present in the N-terminus of all these mRNAs and is recognized by the viral shutoff protein to provide expression although conventional translation via ribosome scanning from the cap has been shut off in the host cell (By similarity).</text>
</comment>
<comment type="similarity">
    <text evidence="2">Belongs to the adenoviridae fiber family.</text>
</comment>
<dbReference type="EMBL" id="D16839">
    <property type="protein sequence ID" value="BAA04115.1"/>
    <property type="molecule type" value="Genomic_DNA"/>
</dbReference>
<dbReference type="EMBL" id="AF030154">
    <property type="protein sequence ID" value="AAD09736.1"/>
    <property type="molecule type" value="Genomic_DNA"/>
</dbReference>
<dbReference type="RefSeq" id="NP_046331.1">
    <property type="nucleotide sequence ID" value="NC_001876.1"/>
</dbReference>
<dbReference type="SMR" id="Q03553"/>
<dbReference type="KEGG" id="vg:2652975"/>
<dbReference type="OrthoDB" id="14820at10239"/>
<dbReference type="Proteomes" id="UP000140422">
    <property type="component" value="Genome"/>
</dbReference>
<dbReference type="GO" id="GO:0042025">
    <property type="term" value="C:host cell nucleus"/>
    <property type="evidence" value="ECO:0007669"/>
    <property type="project" value="UniProtKB-SubCell"/>
</dbReference>
<dbReference type="GO" id="GO:0019028">
    <property type="term" value="C:viral capsid"/>
    <property type="evidence" value="ECO:0007669"/>
    <property type="project" value="UniProtKB-KW"/>
</dbReference>
<dbReference type="GO" id="GO:0098671">
    <property type="term" value="P:adhesion receptor-mediated virion attachment to host cell"/>
    <property type="evidence" value="ECO:0007669"/>
    <property type="project" value="UniProtKB-KW"/>
</dbReference>
<dbReference type="GO" id="GO:0007155">
    <property type="term" value="P:cell adhesion"/>
    <property type="evidence" value="ECO:0007669"/>
    <property type="project" value="InterPro"/>
</dbReference>
<dbReference type="GO" id="GO:0046718">
    <property type="term" value="P:symbiont entry into host cell"/>
    <property type="evidence" value="ECO:0007669"/>
    <property type="project" value="UniProtKB-KW"/>
</dbReference>
<dbReference type="Gene3D" id="6.20.10.20">
    <property type="match status" value="4"/>
</dbReference>
<dbReference type="Gene3D" id="2.60.90.10">
    <property type="entry name" value="Adenovirus pIV-related, attachment domain"/>
    <property type="match status" value="1"/>
</dbReference>
<dbReference type="Gene3D" id="2.10.25.20">
    <property type="entry name" value="reovirus attachment protein sigma1, domain 1"/>
    <property type="match status" value="5"/>
</dbReference>
<dbReference type="InterPro" id="IPR000931">
    <property type="entry name" value="Adeno_fibre"/>
</dbReference>
<dbReference type="InterPro" id="IPR000978">
    <property type="entry name" value="Adeno_fibre_knob"/>
</dbReference>
<dbReference type="InterPro" id="IPR000939">
    <property type="entry name" value="Adenobir_fibre_prot_rpt/shaft"/>
</dbReference>
<dbReference type="InterPro" id="IPR008982">
    <property type="entry name" value="Adenovirus_pIV-like_att"/>
</dbReference>
<dbReference type="InterPro" id="IPR009013">
    <property type="entry name" value="Attachment_protein_shaft_sf"/>
</dbReference>
<dbReference type="InterPro" id="IPR006626">
    <property type="entry name" value="PbH1"/>
</dbReference>
<dbReference type="Pfam" id="PF00541">
    <property type="entry name" value="Adeno_knob"/>
    <property type="match status" value="1"/>
</dbReference>
<dbReference type="Pfam" id="PF00608">
    <property type="entry name" value="Adeno_shaft"/>
    <property type="match status" value="13"/>
</dbReference>
<dbReference type="PRINTS" id="PR00307">
    <property type="entry name" value="ADENOVSFIBRE"/>
</dbReference>
<dbReference type="SMART" id="SM00710">
    <property type="entry name" value="PbH1"/>
    <property type="match status" value="6"/>
</dbReference>
<dbReference type="SUPFAM" id="SSF51225">
    <property type="entry name" value="Fibre shaft of virus attachment proteins"/>
    <property type="match status" value="7"/>
</dbReference>
<dbReference type="SUPFAM" id="SSF49835">
    <property type="entry name" value="Virus attachment protein globular domain"/>
    <property type="match status" value="1"/>
</dbReference>
<reference key="1">
    <citation type="journal article" date="1992" name="J. Gen. Virol.">
        <title>Sequence analysis of bovine adenovirus type 3 early region 3 and fibre protein genes.</title>
        <authorList>
            <person name="Mittal S.K."/>
            <person name="Prevec L."/>
            <person name="Babiuk L.A."/>
            <person name="Graham F.L."/>
        </authorList>
    </citation>
    <scope>NUCLEOTIDE SEQUENCE [GENOMIC DNA]</scope>
</reference>
<reference key="2">
    <citation type="journal article" date="1993" name="J. Gen. Virol.">
        <title>Sequence analysis of bovine adenovirus type 3 early region 3 and fibre protein genes.</title>
        <authorList>
            <person name="Mittal S.K."/>
            <person name="Prevec L."/>
            <person name="Babiuk L.A."/>
            <person name="Graham F.L."/>
        </authorList>
    </citation>
    <scope>SEQUENCE REVISION</scope>
</reference>
<reference key="3">
    <citation type="journal article" date="1998" name="J. Virol.">
        <title>Nucleotide sequence, genome organization, and transcription map of bovine adenovirus type 3.</title>
        <authorList>
            <person name="Reddy P.S."/>
            <person name="Idamakanti N."/>
            <person name="Zakhartchouk A.N."/>
            <person name="Baxi M.K."/>
            <person name="Lee J.B."/>
            <person name="Pyne C."/>
            <person name="Babiuk L.A."/>
            <person name="Tikoo S.K."/>
        </authorList>
    </citation>
    <scope>NUCLEOTIDE SEQUENCE [LARGE SCALE GENOMIC DNA]</scope>
    <source>
        <strain>WBR-1</strain>
    </source>
</reference>
<gene>
    <name type="ORF">L5</name>
</gene>
<evidence type="ECO:0000250" key="1"/>
<evidence type="ECO:0000305" key="2"/>
<keyword id="KW-0167">Capsid protein</keyword>
<keyword id="KW-1048">Host nucleus</keyword>
<keyword id="KW-0945">Host-virus interaction</keyword>
<keyword id="KW-0426">Late protein</keyword>
<keyword id="KW-1185">Reference proteome</keyword>
<keyword id="KW-1233">Viral attachment to host adhesion receptor</keyword>
<keyword id="KW-1161">Viral attachment to host cell</keyword>
<keyword id="KW-0946">Virion</keyword>
<keyword id="KW-1160">Virus entry into host cell</keyword>
<accession>Q03553</accession>
<proteinExistence type="evidence at transcript level"/>
<organism>
    <name type="scientific">Bovine adenovirus B serotype 3</name>
    <name type="common">BAdV-3</name>
    <name type="synonym">Mastadenovirus bos3</name>
    <dbReference type="NCBI Taxonomy" id="10510"/>
    <lineage>
        <taxon>Viruses</taxon>
        <taxon>Varidnaviria</taxon>
        <taxon>Bamfordvirae</taxon>
        <taxon>Preplasmiviricota</taxon>
        <taxon>Tectiliviricetes</taxon>
        <taxon>Rowavirales</taxon>
        <taxon>Adenoviridae</taxon>
        <taxon>Mastadenovirus</taxon>
        <taxon>Bovine mastadenovirus B</taxon>
    </lineage>
</organism>
<name>SPIKE_ADEB3</name>
<feature type="chain" id="PRO_0000221803" description="Fiber protein">
    <location>
        <begin position="1"/>
        <end position="976"/>
    </location>
</feature>
<organismHost>
    <name type="scientific">Bos taurus</name>
    <name type="common">Bovine</name>
    <dbReference type="NCBI Taxonomy" id="9913"/>
</organismHost>
<sequence>MKRSVPQDFNLVYPYKAKRPNIMPPFFDRNGFVENQEATLAMLVEKPLTFDKEGALTLGVGRGIRINPAGLLETNDLASAVFPPLASDEAGNVTLNMSDGLYTKDNKLAVKVGPGLSLDSNNALQVHTGDGLTVTDDKVSLNTQAPLSTTSAGLSLLLGPSLHLGEEERLTVNTGAGLQISNNALAVKVGSGITVDAQNQLAASLGDGLESRDNKTVVKAGPGLTITNQALTVATGNGLQVNPEGQLQLNITAGQGLNFANNSLAVELGSGLHFPPGQNQVSLYPGDGIDIRDNRVTVPAGPGLRMLNHQLAVASGDGLEVHSDTLRLKLSHGLTFENGAVRAKLGPGLGTDDSGRSVVRTGRGLRVANGQVQIFSGRGTAIGTDSSLTLNIRAPLQFSGPALTASLQGSGPITYNSNNGTFGLSIGPGMWVDQNRLQVNPGAGLVFQGNNLVPNLADPLAISDSKISLSLGPGLTQASNALTLSLGNGLEFSNQAVAIKAGRGLRFESSSQALESSLTVGNGLTLTDTVIRPNLGDGLEVRDNKIIVKLGANLRFENGAVTAGTVNPSAPEAPPTLTAEPPLRASNSHLQLSLSEGLVVHNNALALQLGDGMEVNQHGLTLRVGSGLQMRDGILTVTPSGTPIEPRLTAPLTQTENGIGLALGAGLELDESALQVKVGPGMRLNPVEKYVTLLLGPGLSFGQPANRTNYDVRVSVEPPMVFGQRGQLTFLVGHGLHIQNSKLQLNLGQGLRTDPVTNQLEVPLGQGLEIADESQVRVKLGDGLQFDSQARITTAPNMVTETLWTGTGSNANVTWRGYTAPGSKLFLSLTRFSTGLVLGNMTIDSNASFGQYINAGHEQIECFILLDNQGNLKEGSNLQGTWEVKNNPSASKAAFLPSTALYPILNESRGSLPGKNLVGMQAILGGGGTCTVIATLNGRRSNNYPAGQSIIFVWQEFNTIARQPLNHSTLTFSYWT</sequence>